<evidence type="ECO:0000255" key="1">
    <source>
        <dbReference type="HAMAP-Rule" id="MF_01623"/>
    </source>
</evidence>
<evidence type="ECO:0000256" key="2">
    <source>
        <dbReference type="SAM" id="MobiDB-lite"/>
    </source>
</evidence>
<dbReference type="EC" id="3.4.24.-" evidence="1"/>
<dbReference type="EMBL" id="AE017220">
    <property type="protein sequence ID" value="AAX66291.1"/>
    <property type="molecule type" value="Genomic_DNA"/>
</dbReference>
<dbReference type="RefSeq" id="WP_001540544.1">
    <property type="nucleotide sequence ID" value="NC_006905.1"/>
</dbReference>
<dbReference type="SMR" id="Q57LX1"/>
<dbReference type="MEROPS" id="M74.001"/>
<dbReference type="KEGG" id="sec:SCH_2385"/>
<dbReference type="HOGENOM" id="CLU_052496_0_0_6"/>
<dbReference type="Proteomes" id="UP000000538">
    <property type="component" value="Chromosome"/>
</dbReference>
<dbReference type="GO" id="GO:0030288">
    <property type="term" value="C:outer membrane-bounded periplasmic space"/>
    <property type="evidence" value="ECO:0007669"/>
    <property type="project" value="InterPro"/>
</dbReference>
<dbReference type="GO" id="GO:0046872">
    <property type="term" value="F:metal ion binding"/>
    <property type="evidence" value="ECO:0007669"/>
    <property type="project" value="UniProtKB-KW"/>
</dbReference>
<dbReference type="GO" id="GO:0004222">
    <property type="term" value="F:metalloendopeptidase activity"/>
    <property type="evidence" value="ECO:0007669"/>
    <property type="project" value="UniProtKB-UniRule"/>
</dbReference>
<dbReference type="GO" id="GO:0004252">
    <property type="term" value="F:serine-type endopeptidase activity"/>
    <property type="evidence" value="ECO:0007669"/>
    <property type="project" value="InterPro"/>
</dbReference>
<dbReference type="GO" id="GO:0000270">
    <property type="term" value="P:peptidoglycan metabolic process"/>
    <property type="evidence" value="ECO:0007669"/>
    <property type="project" value="UniProtKB-UniRule"/>
</dbReference>
<dbReference type="GO" id="GO:0006508">
    <property type="term" value="P:proteolysis"/>
    <property type="evidence" value="ECO:0007669"/>
    <property type="project" value="UniProtKB-KW"/>
</dbReference>
<dbReference type="FunFam" id="3.30.1380.10:FF:000002">
    <property type="entry name" value="Penicillin-insensitive murein endopeptidase"/>
    <property type="match status" value="1"/>
</dbReference>
<dbReference type="Gene3D" id="3.30.1380.10">
    <property type="match status" value="1"/>
</dbReference>
<dbReference type="HAMAP" id="MF_01623">
    <property type="entry name" value="MepA"/>
    <property type="match status" value="1"/>
</dbReference>
<dbReference type="InterPro" id="IPR009045">
    <property type="entry name" value="Hedgehog_sig/DD-Pept_Zn-bd_sf"/>
</dbReference>
<dbReference type="InterPro" id="IPR005073">
    <property type="entry name" value="Peptidase_M74"/>
</dbReference>
<dbReference type="NCBIfam" id="NF006947">
    <property type="entry name" value="PRK09429.1"/>
    <property type="match status" value="1"/>
</dbReference>
<dbReference type="Pfam" id="PF03411">
    <property type="entry name" value="Peptidase_M74"/>
    <property type="match status" value="1"/>
</dbReference>
<dbReference type="PIRSF" id="PIRSF018455">
    <property type="entry name" value="MepA"/>
    <property type="match status" value="1"/>
</dbReference>
<dbReference type="SUPFAM" id="SSF55166">
    <property type="entry name" value="Hedgehog/DD-peptidase"/>
    <property type="match status" value="1"/>
</dbReference>
<comment type="function">
    <text evidence="1">Murein endopeptidase that cleaves the D-alanyl-meso-2,6-diamino-pimelyl amide bond that connects peptidoglycan strands. Likely plays a role in the removal of murein from the sacculus.</text>
</comment>
<comment type="cofactor">
    <cofactor evidence="1">
        <name>Zn(2+)</name>
        <dbReference type="ChEBI" id="CHEBI:29105"/>
    </cofactor>
    <text evidence="1">Binds 2 Zn(2+) ions per subunit. Zn(2+) ion 1 is bound in the active site. Zn(2+) ion 2 is bound at the dimer interface by residues from both subunits.</text>
</comment>
<comment type="subunit">
    <text evidence="1">Dimer.</text>
</comment>
<comment type="subcellular location">
    <subcellularLocation>
        <location evidence="1">Periplasm</location>
    </subcellularLocation>
</comment>
<comment type="similarity">
    <text evidence="1">Belongs to the peptidase M74 family.</text>
</comment>
<organism>
    <name type="scientific">Salmonella choleraesuis (strain SC-B67)</name>
    <dbReference type="NCBI Taxonomy" id="321314"/>
    <lineage>
        <taxon>Bacteria</taxon>
        <taxon>Pseudomonadati</taxon>
        <taxon>Pseudomonadota</taxon>
        <taxon>Gammaproteobacteria</taxon>
        <taxon>Enterobacterales</taxon>
        <taxon>Enterobacteriaceae</taxon>
        <taxon>Salmonella</taxon>
    </lineage>
</organism>
<accession>Q57LX1</accession>
<keyword id="KW-1015">Disulfide bond</keyword>
<keyword id="KW-0378">Hydrolase</keyword>
<keyword id="KW-0479">Metal-binding</keyword>
<keyword id="KW-0482">Metalloprotease</keyword>
<keyword id="KW-0574">Periplasm</keyword>
<keyword id="KW-0645">Protease</keyword>
<keyword id="KW-0732">Signal</keyword>
<keyword id="KW-0862">Zinc</keyword>
<proteinExistence type="inferred from homology"/>
<reference key="1">
    <citation type="journal article" date="2005" name="Nucleic Acids Res.">
        <title>The genome sequence of Salmonella enterica serovar Choleraesuis, a highly invasive and resistant zoonotic pathogen.</title>
        <authorList>
            <person name="Chiu C.-H."/>
            <person name="Tang P."/>
            <person name="Chu C."/>
            <person name="Hu S."/>
            <person name="Bao Q."/>
            <person name="Yu J."/>
            <person name="Chou Y.-Y."/>
            <person name="Wang H.-S."/>
            <person name="Lee Y.-S."/>
        </authorList>
    </citation>
    <scope>NUCLEOTIDE SEQUENCE [LARGE SCALE GENOMIC DNA]</scope>
    <source>
        <strain>SC-B67</strain>
    </source>
</reference>
<protein>
    <recommendedName>
        <fullName evidence="1">Penicillin-insensitive murein endopeptidase</fullName>
        <ecNumber evidence="1">3.4.24.-</ecNumber>
    </recommendedName>
    <alternativeName>
        <fullName evidence="1">D-alanyl-D-alanine-endopeptidase</fullName>
        <shortName evidence="1">DD-endopeptidase</shortName>
    </alternativeName>
</protein>
<name>MEPA_SALCH</name>
<sequence length="274" mass="30249">MKKTAIALLAWFVSSASLAATPWQKITHPVPGAAQSIASFANGCIIGADTLPVQSDNYQVMRTDQRRYFGHPDLVMFIQRLSHQAQQRGLGTVLIGDMGMPAGGRFNGGHASHQTGLDVDIFLQLPKTRWSQAQLLRPQALDLVSRDGKHVVPSRWSSDIASLIKLAAQDNDVTRIFVNPAIKQQLCLDAGSDRDWLRKVRPWFQHRAHMHVRLRCPADSLECEDQPLPPPGDGCGAELQSWFEPPKPGTTKPEKKTPPPLPPSCQALLDEHVL</sequence>
<feature type="signal peptide" evidence="1">
    <location>
        <begin position="1"/>
        <end position="19"/>
    </location>
</feature>
<feature type="chain" id="PRO_0000044579" description="Penicillin-insensitive murein endopeptidase">
    <location>
        <begin position="20"/>
        <end position="274"/>
    </location>
</feature>
<feature type="region of interest" description="Disordered" evidence="2">
    <location>
        <begin position="225"/>
        <end position="274"/>
    </location>
</feature>
<feature type="binding site" evidence="1">
    <location>
        <position position="110"/>
    </location>
    <ligand>
        <name>Zn(2+)</name>
        <dbReference type="ChEBI" id="CHEBI:29105"/>
        <label>1</label>
    </ligand>
</feature>
<feature type="binding site" evidence="1">
    <location>
        <position position="113"/>
    </location>
    <ligand>
        <name>Zn(2+)</name>
        <dbReference type="ChEBI" id="CHEBI:29105"/>
        <label>1</label>
    </ligand>
</feature>
<feature type="binding site" evidence="1">
    <location>
        <position position="120"/>
    </location>
    <ligand>
        <name>Zn(2+)</name>
        <dbReference type="ChEBI" id="CHEBI:29105"/>
        <label>1</label>
    </ligand>
</feature>
<feature type="binding site" evidence="1">
    <location>
        <position position="147"/>
    </location>
    <ligand>
        <name>Zn(2+)</name>
        <dbReference type="ChEBI" id="CHEBI:29105"/>
        <label>2</label>
    </ligand>
</feature>
<feature type="binding site" evidence="1">
    <location>
        <position position="150"/>
    </location>
    <ligand>
        <name>Zn(2+)</name>
        <dbReference type="ChEBI" id="CHEBI:29105"/>
        <label>2</label>
    </ligand>
</feature>
<feature type="binding site" evidence="1">
    <location>
        <position position="211"/>
    </location>
    <ligand>
        <name>Zn(2+)</name>
        <dbReference type="ChEBI" id="CHEBI:29105"/>
        <label>1</label>
    </ligand>
</feature>
<feature type="disulfide bond" evidence="1">
    <location>
        <begin position="44"/>
        <end position="265"/>
    </location>
</feature>
<feature type="disulfide bond" evidence="1">
    <location>
        <begin position="187"/>
        <end position="235"/>
    </location>
</feature>
<feature type="disulfide bond" evidence="1">
    <location>
        <begin position="216"/>
        <end position="223"/>
    </location>
</feature>
<gene>
    <name evidence="1" type="primary">mepA</name>
    <name type="ordered locus">SCH_2385</name>
</gene>